<proteinExistence type="inferred from homology"/>
<gene>
    <name type="primary">aaxB</name>
    <name type="ordered locus">CAB697</name>
</gene>
<sequence>MPYGTRYPTLAFHTGGVGESDDGMPPQPFETFCYDSALLQAKIENFNIVPYTSVLPKELFGNIVPVDQCVKFFKHGAVLEVIMAGRGASTVEGTHAITTGVGICWGQDKNGELIGGWAAEYVEFFPTWINDEIAESHAKMWLKKSLQHELDLRSVVKHSEFQYFHNYINIKQKYGFSLTALGFLNFENADPVTIK</sequence>
<dbReference type="EC" id="4.1.1.19"/>
<dbReference type="EMBL" id="CR848038">
    <property type="protein sequence ID" value="CAH64144.1"/>
    <property type="molecule type" value="Genomic_DNA"/>
</dbReference>
<dbReference type="RefSeq" id="WP_011097272.1">
    <property type="nucleotide sequence ID" value="NC_004552.2"/>
</dbReference>
<dbReference type="SMR" id="Q5L5E7"/>
<dbReference type="KEGG" id="cab:CAB697"/>
<dbReference type="eggNOG" id="COG1945">
    <property type="taxonomic scope" value="Bacteria"/>
</dbReference>
<dbReference type="HOGENOM" id="CLU_1313366_0_0_0"/>
<dbReference type="OrthoDB" id="9783061at2"/>
<dbReference type="Proteomes" id="UP000001012">
    <property type="component" value="Chromosome"/>
</dbReference>
<dbReference type="GO" id="GO:0005737">
    <property type="term" value="C:cytoplasm"/>
    <property type="evidence" value="ECO:0007669"/>
    <property type="project" value="UniProtKB-SubCell"/>
</dbReference>
<dbReference type="GO" id="GO:0008792">
    <property type="term" value="F:arginine decarboxylase activity"/>
    <property type="evidence" value="ECO:0007669"/>
    <property type="project" value="UniProtKB-EC"/>
</dbReference>
<dbReference type="GO" id="GO:0006527">
    <property type="term" value="P:arginine catabolic process"/>
    <property type="evidence" value="ECO:0007669"/>
    <property type="project" value="InterPro"/>
</dbReference>
<dbReference type="Gene3D" id="3.50.20.10">
    <property type="entry name" value="Pyruvoyl-Dependent Histidine Decarboxylase, subunit B"/>
    <property type="match status" value="1"/>
</dbReference>
<dbReference type="InterPro" id="IPR016104">
    <property type="entry name" value="Pyr-dep_his/arg-deCO2ase"/>
</dbReference>
<dbReference type="InterPro" id="IPR016105">
    <property type="entry name" value="Pyr-dep_his/arg-deCO2ase_sand"/>
</dbReference>
<dbReference type="InterPro" id="IPR002724">
    <property type="entry name" value="Pyruvoyl-dep_arg_deCO2ase"/>
</dbReference>
<dbReference type="PANTHER" id="PTHR40438">
    <property type="entry name" value="PYRUVOYL-DEPENDENT ARGININE DECARBOXYLASE"/>
    <property type="match status" value="1"/>
</dbReference>
<dbReference type="PANTHER" id="PTHR40438:SF1">
    <property type="entry name" value="PYRUVOYL-DEPENDENT ARGININE DECARBOXYLASE"/>
    <property type="match status" value="1"/>
</dbReference>
<dbReference type="Pfam" id="PF01862">
    <property type="entry name" value="PvlArgDC"/>
    <property type="match status" value="1"/>
</dbReference>
<dbReference type="SFLD" id="SFLDG01170">
    <property type="entry name" value="Pyruvoyl-dependent_arginine_de"/>
    <property type="match status" value="1"/>
</dbReference>
<dbReference type="SUPFAM" id="SSF56271">
    <property type="entry name" value="Pyruvoyl-dependent histidine and arginine decarboxylases"/>
    <property type="match status" value="1"/>
</dbReference>
<comment type="function">
    <text evidence="1">Part of the AaxABC system, catalyzes the decarboxylation of L-arginine. The arginine uptake by the bacterium in the macrophage may be a virulence factor against the host innate immune response (By similarity).</text>
</comment>
<comment type="catalytic activity">
    <reaction>
        <text>L-arginine + H(+) = agmatine + CO2</text>
        <dbReference type="Rhea" id="RHEA:17641"/>
        <dbReference type="ChEBI" id="CHEBI:15378"/>
        <dbReference type="ChEBI" id="CHEBI:16526"/>
        <dbReference type="ChEBI" id="CHEBI:32682"/>
        <dbReference type="ChEBI" id="CHEBI:58145"/>
        <dbReference type="EC" id="4.1.1.19"/>
    </reaction>
</comment>
<comment type="cofactor">
    <cofactor evidence="1">
        <name>pyruvate</name>
        <dbReference type="ChEBI" id="CHEBI:15361"/>
    </cofactor>
    <text evidence="1">Binds 1 pyruvoyl group covalently per subunit.</text>
</comment>
<comment type="subunit">
    <text evidence="1">Trimer of an alpha-beta dimer.</text>
</comment>
<comment type="subcellular location">
    <subcellularLocation>
        <location evidence="1">Cytoplasm</location>
    </subcellularLocation>
</comment>
<comment type="similarity">
    <text evidence="2">Belongs to the pyruvoyl-dependent arginine decarboxylase family.</text>
</comment>
<keyword id="KW-0963">Cytoplasm</keyword>
<keyword id="KW-0210">Decarboxylase</keyword>
<keyword id="KW-0456">Lyase</keyword>
<keyword id="KW-0670">Pyruvate</keyword>
<keyword id="KW-0843">Virulence</keyword>
<feature type="chain" id="PRO_0000364043" description="Pyruvoyl-dependent arginine decarboxylase subunit beta">
    <location>
        <begin position="1"/>
        <end position="52"/>
    </location>
</feature>
<feature type="chain" id="PRO_0000364044" description="Pyruvoyl-dependent arginine decarboxylase subunit alpha">
    <location>
        <begin position="53"/>
        <end position="195"/>
    </location>
</feature>
<feature type="site" description="Cleavage (non-hydrolytic)" evidence="1">
    <location>
        <begin position="52"/>
        <end position="53"/>
    </location>
</feature>
<feature type="modified residue" description="Pyruvic acid (Ser)" evidence="1">
    <location>
        <position position="53"/>
    </location>
</feature>
<evidence type="ECO:0000250" key="1"/>
<evidence type="ECO:0000305" key="2"/>
<protein>
    <recommendedName>
        <fullName>Pyruvoyl-dependent arginine decarboxylase AaxB</fullName>
        <shortName>PvlArgDC</shortName>
        <ecNumber>4.1.1.19</ecNumber>
    </recommendedName>
    <alternativeName>
        <fullName>Biodegradative arginine decarboxylase</fullName>
    </alternativeName>
    <component>
        <recommendedName>
            <fullName>Pyruvoyl-dependent arginine decarboxylase subunit beta</fullName>
        </recommendedName>
    </component>
    <component>
        <recommendedName>
            <fullName>Pyruvoyl-dependent arginine decarboxylase subunit alpha</fullName>
        </recommendedName>
    </component>
</protein>
<accession>Q5L5E7</accession>
<organism>
    <name type="scientific">Chlamydia abortus (strain DSM 27085 / S26/3)</name>
    <name type="common">Chlamydophila abortus</name>
    <dbReference type="NCBI Taxonomy" id="218497"/>
    <lineage>
        <taxon>Bacteria</taxon>
        <taxon>Pseudomonadati</taxon>
        <taxon>Chlamydiota</taxon>
        <taxon>Chlamydiia</taxon>
        <taxon>Chlamydiales</taxon>
        <taxon>Chlamydiaceae</taxon>
        <taxon>Chlamydia/Chlamydophila group</taxon>
        <taxon>Chlamydia</taxon>
    </lineage>
</organism>
<name>AAXB_CHLAB</name>
<reference key="1">
    <citation type="journal article" date="2005" name="Genome Res.">
        <title>The Chlamydophila abortus genome sequence reveals an array of variable proteins that contribute to interspecies variation.</title>
        <authorList>
            <person name="Thomson N.R."/>
            <person name="Yeats C."/>
            <person name="Bell K."/>
            <person name="Holden M.T.G."/>
            <person name="Bentley S.D."/>
            <person name="Livingstone M."/>
            <person name="Cerdeno-Tarraga A.-M."/>
            <person name="Harris B."/>
            <person name="Doggett J."/>
            <person name="Ormond D."/>
            <person name="Mungall K."/>
            <person name="Clarke K."/>
            <person name="Feltwell T."/>
            <person name="Hance Z."/>
            <person name="Sanders M."/>
            <person name="Quail M.A."/>
            <person name="Price C."/>
            <person name="Barrell B.G."/>
            <person name="Parkhill J."/>
            <person name="Longbottom D."/>
        </authorList>
    </citation>
    <scope>NUCLEOTIDE SEQUENCE [LARGE SCALE GENOMIC DNA]</scope>
    <source>
        <strain>DSM 27085 / S26/3</strain>
    </source>
</reference>